<comment type="function">
    <text evidence="1">Specifically methylates the guanine in position 1835 (m2G1835) of 23S rRNA.</text>
</comment>
<comment type="catalytic activity">
    <reaction evidence="1">
        <text>guanosine(1835) in 23S rRNA + S-adenosyl-L-methionine = N(2)-methylguanosine(1835) in 23S rRNA + S-adenosyl-L-homocysteine + H(+)</text>
        <dbReference type="Rhea" id="RHEA:42744"/>
        <dbReference type="Rhea" id="RHEA-COMP:10217"/>
        <dbReference type="Rhea" id="RHEA-COMP:10218"/>
        <dbReference type="ChEBI" id="CHEBI:15378"/>
        <dbReference type="ChEBI" id="CHEBI:57856"/>
        <dbReference type="ChEBI" id="CHEBI:59789"/>
        <dbReference type="ChEBI" id="CHEBI:74269"/>
        <dbReference type="ChEBI" id="CHEBI:74481"/>
        <dbReference type="EC" id="2.1.1.174"/>
    </reaction>
</comment>
<comment type="subcellular location">
    <subcellularLocation>
        <location evidence="1">Cytoplasm</location>
    </subcellularLocation>
</comment>
<comment type="similarity">
    <text evidence="1">Belongs to the methyltransferase superfamily. RlmG family.</text>
</comment>
<comment type="sequence caution" evidence="2">
    <conflict type="erroneous initiation">
        <sequence resource="EMBL-CDS" id="CAL16896"/>
    </conflict>
</comment>
<gene>
    <name evidence="1" type="primary">rlmG</name>
    <name type="ordered locus">ABO_1448</name>
</gene>
<feature type="chain" id="PRO_0000366446" description="Ribosomal RNA large subunit methyltransferase G">
    <location>
        <begin position="1"/>
        <end position="390"/>
    </location>
</feature>
<evidence type="ECO:0000255" key="1">
    <source>
        <dbReference type="HAMAP-Rule" id="MF_01859"/>
    </source>
</evidence>
<evidence type="ECO:0000305" key="2"/>
<organism>
    <name type="scientific">Alcanivorax borkumensis (strain ATCC 700651 / DSM 11573 / NCIMB 13689 / SK2)</name>
    <dbReference type="NCBI Taxonomy" id="393595"/>
    <lineage>
        <taxon>Bacteria</taxon>
        <taxon>Pseudomonadati</taxon>
        <taxon>Pseudomonadota</taxon>
        <taxon>Gammaproteobacteria</taxon>
        <taxon>Oceanospirillales</taxon>
        <taxon>Alcanivoracaceae</taxon>
        <taxon>Alcanivorax</taxon>
    </lineage>
</organism>
<keyword id="KW-0963">Cytoplasm</keyword>
<keyword id="KW-0489">Methyltransferase</keyword>
<keyword id="KW-1185">Reference proteome</keyword>
<keyword id="KW-0698">rRNA processing</keyword>
<keyword id="KW-0949">S-adenosyl-L-methionine</keyword>
<keyword id="KW-0808">Transferase</keyword>
<accession>Q0VPK2</accession>
<dbReference type="EC" id="2.1.1.174" evidence="1"/>
<dbReference type="EMBL" id="AM286690">
    <property type="protein sequence ID" value="CAL16896.1"/>
    <property type="status" value="ALT_INIT"/>
    <property type="molecule type" value="Genomic_DNA"/>
</dbReference>
<dbReference type="RefSeq" id="WP_041704954.1">
    <property type="nucleotide sequence ID" value="NC_008260.1"/>
</dbReference>
<dbReference type="SMR" id="Q0VPK2"/>
<dbReference type="STRING" id="393595.ABO_1448"/>
<dbReference type="KEGG" id="abo:ABO_1448"/>
<dbReference type="eggNOG" id="COG2813">
    <property type="taxonomic scope" value="Bacteria"/>
</dbReference>
<dbReference type="HOGENOM" id="CLU_040288_4_0_6"/>
<dbReference type="OrthoDB" id="29650at2"/>
<dbReference type="Proteomes" id="UP000008871">
    <property type="component" value="Chromosome"/>
</dbReference>
<dbReference type="GO" id="GO:0005737">
    <property type="term" value="C:cytoplasm"/>
    <property type="evidence" value="ECO:0007669"/>
    <property type="project" value="UniProtKB-SubCell"/>
</dbReference>
<dbReference type="GO" id="GO:0052916">
    <property type="term" value="F:23S rRNA (guanine(1835)-N(2))-methyltransferase activity"/>
    <property type="evidence" value="ECO:0007669"/>
    <property type="project" value="UniProtKB-EC"/>
</dbReference>
<dbReference type="GO" id="GO:0003676">
    <property type="term" value="F:nucleic acid binding"/>
    <property type="evidence" value="ECO:0007669"/>
    <property type="project" value="InterPro"/>
</dbReference>
<dbReference type="CDD" id="cd02440">
    <property type="entry name" value="AdoMet_MTases"/>
    <property type="match status" value="1"/>
</dbReference>
<dbReference type="Gene3D" id="3.40.50.150">
    <property type="entry name" value="Vaccinia Virus protein VP39"/>
    <property type="match status" value="2"/>
</dbReference>
<dbReference type="HAMAP" id="MF_01859">
    <property type="entry name" value="23SrRNA_methyltr_G"/>
    <property type="match status" value="1"/>
</dbReference>
<dbReference type="InterPro" id="IPR002052">
    <property type="entry name" value="DNA_methylase_N6_adenine_CS"/>
</dbReference>
<dbReference type="InterPro" id="IPR017237">
    <property type="entry name" value="rRNA_m2G-MeTrfase_RlmG"/>
</dbReference>
<dbReference type="InterPro" id="IPR046977">
    <property type="entry name" value="RsmC/RlmG"/>
</dbReference>
<dbReference type="InterPro" id="IPR029063">
    <property type="entry name" value="SAM-dependent_MTases_sf"/>
</dbReference>
<dbReference type="InterPro" id="IPR007848">
    <property type="entry name" value="Small_mtfrase_dom"/>
</dbReference>
<dbReference type="PANTHER" id="PTHR47816:SF5">
    <property type="entry name" value="RIBOSOMAL RNA LARGE SUBUNIT METHYLTRANSFERASE G"/>
    <property type="match status" value="1"/>
</dbReference>
<dbReference type="PANTHER" id="PTHR47816">
    <property type="entry name" value="RIBOSOMAL RNA SMALL SUBUNIT METHYLTRANSFERASE C"/>
    <property type="match status" value="1"/>
</dbReference>
<dbReference type="Pfam" id="PF05175">
    <property type="entry name" value="MTS"/>
    <property type="match status" value="1"/>
</dbReference>
<dbReference type="PIRSF" id="PIRSF037565">
    <property type="entry name" value="RRNA_m2G_Mtase_RsmD_prd"/>
    <property type="match status" value="1"/>
</dbReference>
<dbReference type="SUPFAM" id="SSF53335">
    <property type="entry name" value="S-adenosyl-L-methionine-dependent methyltransferases"/>
    <property type="match status" value="1"/>
</dbReference>
<sequence>MTPFHHPWGELCLQRWPRRRNETLQAWDNADLYLLNTLAERGQALGNGDNAPKTLVLNDQQGALCLALQQAAASALDIESSGDSYTAAAAARANAVDNGLDPNLLFCWPLDAPKQSPDQVIMRVPKSIALLQWQLQWLSGHLPKGVPIWLAGMDKHLPRQLVPLMQRYLGNGRAEYGWKKARLFSAQAPGRVLADTDYPCRVDALQWRLTVHAGVFAQQQLDIGARFFLDHLPEALHTGAKVADLGCGNGVIGMAVLKANPAARVTFCDESWLALESARDNVSRYFSDAESHFHLGDGLAGLEQRFDCILLNPPFHDGYVVGDHVARRLFNQAATALVPGGELRVIGNRHLGYHKVLARRFTSVTVLASNAKFVVWRCQGPTPSASNPLD</sequence>
<reference key="1">
    <citation type="journal article" date="2006" name="Nat. Biotechnol.">
        <title>Genome sequence of the ubiquitous hydrocarbon-degrading marine bacterium Alcanivorax borkumensis.</title>
        <authorList>
            <person name="Schneiker S."/>
            <person name="Martins dos Santos V.A.P."/>
            <person name="Bartels D."/>
            <person name="Bekel T."/>
            <person name="Brecht M."/>
            <person name="Buhrmester J."/>
            <person name="Chernikova T.N."/>
            <person name="Denaro R."/>
            <person name="Ferrer M."/>
            <person name="Gertler C."/>
            <person name="Goesmann A."/>
            <person name="Golyshina O.V."/>
            <person name="Kaminski F."/>
            <person name="Khachane A.N."/>
            <person name="Lang S."/>
            <person name="Linke B."/>
            <person name="McHardy A.C."/>
            <person name="Meyer F."/>
            <person name="Nechitaylo T."/>
            <person name="Puehler A."/>
            <person name="Regenhardt D."/>
            <person name="Rupp O."/>
            <person name="Sabirova J.S."/>
            <person name="Selbitschka W."/>
            <person name="Yakimov M.M."/>
            <person name="Timmis K.N."/>
            <person name="Vorhoelter F.-J."/>
            <person name="Weidner S."/>
            <person name="Kaiser O."/>
            <person name="Golyshin P.N."/>
        </authorList>
    </citation>
    <scope>NUCLEOTIDE SEQUENCE [LARGE SCALE GENOMIC DNA]</scope>
    <source>
        <strain>ATCC 700651 / DSM 11573 / NCIMB 13689 / SK2</strain>
    </source>
</reference>
<proteinExistence type="inferred from homology"/>
<name>RLMG_ALCBS</name>
<protein>
    <recommendedName>
        <fullName evidence="1">Ribosomal RNA large subunit methyltransferase G</fullName>
        <ecNumber evidence="1">2.1.1.174</ecNumber>
    </recommendedName>
    <alternativeName>
        <fullName evidence="1">23S rRNA m2G1835 methyltransferase</fullName>
    </alternativeName>
    <alternativeName>
        <fullName evidence="1">rRNA (guanine-N(2)-)-methyltransferase RlmG</fullName>
    </alternativeName>
</protein>